<name>ECM14_COCP7</name>
<comment type="function">
    <text evidence="3">Inactive carboxypeptidase that may play a role in cell wall organization and biogenesis.</text>
</comment>
<comment type="cofactor">
    <cofactor evidence="1">
        <name>Zn(2+)</name>
        <dbReference type="ChEBI" id="CHEBI:29105"/>
    </cofactor>
    <text evidence="1">Binds 1 zinc ion per subunit.</text>
</comment>
<comment type="subcellular location">
    <subcellularLocation>
        <location evidence="3">Vacuole</location>
    </subcellularLocation>
    <subcellularLocation>
        <location evidence="3">Secreted</location>
    </subcellularLocation>
</comment>
<comment type="similarity">
    <text evidence="7">Belongs to the peptidase M14 family.</text>
</comment>
<comment type="caution">
    <text evidence="3">Lacks the conserved Glu residue in position 488 essential for carbopeptidase activity. The mature form lacks catalytic activity towards synthetic peptide substrates.</text>
</comment>
<keyword id="KW-0961">Cell wall biogenesis/degradation</keyword>
<keyword id="KW-1015">Disulfide bond</keyword>
<keyword id="KW-0325">Glycoprotein</keyword>
<keyword id="KW-0479">Metal-binding</keyword>
<keyword id="KW-0964">Secreted</keyword>
<keyword id="KW-0732">Signal</keyword>
<keyword id="KW-0926">Vacuole</keyword>
<keyword id="KW-0862">Zinc</keyword>
<protein>
    <recommendedName>
        <fullName evidence="7">Inactive metallocarboxypeptidase ECM14</fullName>
    </recommendedName>
</protein>
<feature type="signal peptide" evidence="4">
    <location>
        <begin position="1"/>
        <end position="20"/>
    </location>
</feature>
<feature type="propeptide" id="PRO_0000453241" evidence="3">
    <location>
        <begin position="21"/>
        <end position="172"/>
    </location>
</feature>
<feature type="chain" id="PRO_0000411181" description="Inactive metallocarboxypeptidase ECM14">
    <location>
        <begin position="173"/>
        <end position="582"/>
    </location>
</feature>
<feature type="domain" description="Peptidase M14" evidence="5">
    <location>
        <begin position="200"/>
        <end position="522"/>
    </location>
</feature>
<feature type="region of interest" description="Disordered" evidence="6">
    <location>
        <begin position="561"/>
        <end position="582"/>
    </location>
</feature>
<feature type="compositionally biased region" description="Acidic residues" evidence="6">
    <location>
        <begin position="561"/>
        <end position="571"/>
    </location>
</feature>
<feature type="binding site" evidence="1">
    <location>
        <begin position="265"/>
        <end position="268"/>
    </location>
    <ligand>
        <name>substrate</name>
    </ligand>
</feature>
<feature type="binding site" evidence="5">
    <location>
        <position position="265"/>
    </location>
    <ligand>
        <name>Zn(2+)</name>
        <dbReference type="ChEBI" id="CHEBI:29105"/>
        <note>catalytic</note>
    </ligand>
</feature>
<feature type="binding site" evidence="5">
    <location>
        <position position="268"/>
    </location>
    <ligand>
        <name>Zn(2+)</name>
        <dbReference type="ChEBI" id="CHEBI:29105"/>
        <note>catalytic</note>
    </ligand>
</feature>
<feature type="binding site" evidence="1">
    <location>
        <position position="323"/>
    </location>
    <ligand>
        <name>substrate</name>
    </ligand>
</feature>
<feature type="binding site" evidence="1">
    <location>
        <begin position="340"/>
        <end position="341"/>
    </location>
    <ligand>
        <name>substrate</name>
    </ligand>
</feature>
<feature type="binding site" evidence="5">
    <location>
        <position position="397"/>
    </location>
    <ligand>
        <name>Zn(2+)</name>
        <dbReference type="ChEBI" id="CHEBI:29105"/>
        <note>catalytic</note>
    </ligand>
</feature>
<feature type="binding site" evidence="1">
    <location>
        <begin position="398"/>
        <end position="399"/>
    </location>
    <ligand>
        <name>substrate</name>
    </ligand>
</feature>
<feature type="glycosylation site" description="N-linked (GlcNAc...) asparagine" evidence="4">
    <location>
        <position position="381"/>
    </location>
</feature>
<feature type="glycosylation site" description="N-linked (GlcNAc...) asparagine" evidence="4">
    <location>
        <position position="387"/>
    </location>
</feature>
<feature type="glycosylation site" description="N-linked (GlcNAc...) asparagine" evidence="4">
    <location>
        <position position="571"/>
    </location>
</feature>
<feature type="disulfide bond" evidence="2">
    <location>
        <begin position="334"/>
        <end position="357"/>
    </location>
</feature>
<gene>
    <name type="primary">ECM14</name>
    <name type="ORF">CPC735_054920</name>
</gene>
<proteinExistence type="inferred from homology"/>
<reference key="1">
    <citation type="journal article" date="2009" name="Genome Res.">
        <title>Comparative genomic analyses of the human fungal pathogens Coccidioides and their relatives.</title>
        <authorList>
            <person name="Sharpton T.J."/>
            <person name="Stajich J.E."/>
            <person name="Rounsley S.D."/>
            <person name="Gardner M.J."/>
            <person name="Wortman J.R."/>
            <person name="Jordar V.S."/>
            <person name="Maiti R."/>
            <person name="Kodira C.D."/>
            <person name="Neafsey D.E."/>
            <person name="Zeng Q."/>
            <person name="Hung C.-Y."/>
            <person name="McMahan C."/>
            <person name="Muszewska A."/>
            <person name="Grynberg M."/>
            <person name="Mandel M.A."/>
            <person name="Kellner E.M."/>
            <person name="Barker B.M."/>
            <person name="Galgiani J.N."/>
            <person name="Orbach M.J."/>
            <person name="Kirkland T.N."/>
            <person name="Cole G.T."/>
            <person name="Henn M.R."/>
            <person name="Birren B.W."/>
            <person name="Taylor J.W."/>
        </authorList>
    </citation>
    <scope>NUCLEOTIDE SEQUENCE [LARGE SCALE GENOMIC DNA]</scope>
    <source>
        <strain>C735</strain>
    </source>
</reference>
<dbReference type="EMBL" id="ACFW01000049">
    <property type="protein sequence ID" value="EER24122.1"/>
    <property type="molecule type" value="Genomic_DNA"/>
</dbReference>
<dbReference type="RefSeq" id="XP_003066267.1">
    <property type="nucleotide sequence ID" value="XM_003066221.1"/>
</dbReference>
<dbReference type="SMR" id="C5PHW9"/>
<dbReference type="GlyCosmos" id="C5PHW9">
    <property type="glycosylation" value="3 sites, No reported glycans"/>
</dbReference>
<dbReference type="GeneID" id="9691737"/>
<dbReference type="KEGG" id="cpw:9691737"/>
<dbReference type="VEuPathDB" id="FungiDB:CPC735_054920"/>
<dbReference type="HOGENOM" id="CLU_019326_1_0_1"/>
<dbReference type="OrthoDB" id="3626597at2759"/>
<dbReference type="Proteomes" id="UP000009084">
    <property type="component" value="Unassembled WGS sequence"/>
</dbReference>
<dbReference type="GO" id="GO:0005576">
    <property type="term" value="C:extracellular region"/>
    <property type="evidence" value="ECO:0007669"/>
    <property type="project" value="UniProtKB-SubCell"/>
</dbReference>
<dbReference type="GO" id="GO:0005773">
    <property type="term" value="C:vacuole"/>
    <property type="evidence" value="ECO:0007669"/>
    <property type="project" value="UniProtKB-SubCell"/>
</dbReference>
<dbReference type="GO" id="GO:0008270">
    <property type="term" value="F:zinc ion binding"/>
    <property type="evidence" value="ECO:0007669"/>
    <property type="project" value="InterPro"/>
</dbReference>
<dbReference type="GO" id="GO:0071555">
    <property type="term" value="P:cell wall organization"/>
    <property type="evidence" value="ECO:0007669"/>
    <property type="project" value="UniProtKB-KW"/>
</dbReference>
<dbReference type="GO" id="GO:0006508">
    <property type="term" value="P:proteolysis"/>
    <property type="evidence" value="ECO:0007669"/>
    <property type="project" value="InterPro"/>
</dbReference>
<dbReference type="CDD" id="cd03860">
    <property type="entry name" value="M14_CP_A-B_like"/>
    <property type="match status" value="1"/>
</dbReference>
<dbReference type="FunFam" id="3.40.630.10:FF:000060">
    <property type="entry name" value="Putative metallocarboxypeptidase ecm14"/>
    <property type="match status" value="1"/>
</dbReference>
<dbReference type="Gene3D" id="3.40.630.10">
    <property type="entry name" value="Zn peptidases"/>
    <property type="match status" value="1"/>
</dbReference>
<dbReference type="InterPro" id="IPR000834">
    <property type="entry name" value="Peptidase_M14"/>
</dbReference>
<dbReference type="PANTHER" id="PTHR11705:SF147">
    <property type="entry name" value="INACTIVE METALLOCARBOXYPEPTIDASE ECM14"/>
    <property type="match status" value="1"/>
</dbReference>
<dbReference type="PANTHER" id="PTHR11705">
    <property type="entry name" value="PROTEASE FAMILY M14 CARBOXYPEPTIDASE A,B"/>
    <property type="match status" value="1"/>
</dbReference>
<dbReference type="Pfam" id="PF00246">
    <property type="entry name" value="Peptidase_M14"/>
    <property type="match status" value="1"/>
</dbReference>
<dbReference type="PRINTS" id="PR00765">
    <property type="entry name" value="CRBOXYPTASEA"/>
</dbReference>
<dbReference type="SMART" id="SM00631">
    <property type="entry name" value="Zn_pept"/>
    <property type="match status" value="1"/>
</dbReference>
<dbReference type="SUPFAM" id="SSF53187">
    <property type="entry name" value="Zn-dependent exopeptidases"/>
    <property type="match status" value="1"/>
</dbReference>
<dbReference type="PROSITE" id="PS00132">
    <property type="entry name" value="CARBOXYPEPT_ZN_1"/>
    <property type="match status" value="1"/>
</dbReference>
<dbReference type="PROSITE" id="PS52035">
    <property type="entry name" value="PEPTIDASE_M14"/>
    <property type="match status" value="1"/>
</dbReference>
<organism>
    <name type="scientific">Coccidioides posadasii (strain C735)</name>
    <name type="common">Valley fever fungus</name>
    <dbReference type="NCBI Taxonomy" id="222929"/>
    <lineage>
        <taxon>Eukaryota</taxon>
        <taxon>Fungi</taxon>
        <taxon>Dikarya</taxon>
        <taxon>Ascomycota</taxon>
        <taxon>Pezizomycotina</taxon>
        <taxon>Eurotiomycetes</taxon>
        <taxon>Eurotiomycetidae</taxon>
        <taxon>Onygenales</taxon>
        <taxon>Onygenaceae</taxon>
        <taxon>Coccidioides</taxon>
    </lineage>
</organism>
<evidence type="ECO:0000250" key="1">
    <source>
        <dbReference type="UniProtKB" id="P00730"/>
    </source>
</evidence>
<evidence type="ECO:0000250" key="2">
    <source>
        <dbReference type="UniProtKB" id="P15085"/>
    </source>
</evidence>
<evidence type="ECO:0000250" key="3">
    <source>
        <dbReference type="UniProtKB" id="P38836"/>
    </source>
</evidence>
<evidence type="ECO:0000255" key="4"/>
<evidence type="ECO:0000255" key="5">
    <source>
        <dbReference type="PROSITE-ProRule" id="PRU01379"/>
    </source>
</evidence>
<evidence type="ECO:0000256" key="6">
    <source>
        <dbReference type="SAM" id="MobiDB-lite"/>
    </source>
</evidence>
<evidence type="ECO:0000305" key="7"/>
<accession>C5PHW9</accession>
<sequence>MHILQVITGATLVSVPFVSAIPSSTSEFLPSTAEQNSAVLHSQGRSPPRLWTRLRDSIIETIWRVPSRQHNPSRIPSSLSIPRAPSSIRARYGDDVVLRFTIRSQNDVQALIEASNILFLDIWASTNEWVDIRLAKDVVSSLLGLLPSSLRTAHVPIIHDLAQAVYESYPQPVSSVPNPHHAFSPSVQQSSETQNIFFQDYQPLSVIIPWMRLLASMFSTHVRLVNLGTSYEGREIVGFRIGVRPANADLPTERRKTIVITGGSHAREWIGVSTVNYVAYSLITGYGKSRAITKLVEEFDWVLIPTMNPDGYVYTWETDRLWRKNRQENNLQFCPGVDLDRTWGYEWDGSDSRSNPCSEDFAGDGPFGGRESKVIAQWALNETNHHNVTFVGFLDLHSYSQQILYPYSYSCTNIPPTLENLEELAIGIAKAIRLTDHEHYDVSSACEGSVSSHKKRRGAALRSMQSAGGSALDWFYHDLHVRYAYQLKLRDKGGYGFLLPKKNIVPTGKEVYNAVLVFGQFLLGRGAQDIDWEGDFQFPAHSRPNVPEKEYRGPDEEYEISNQLEDDDNENDTLLGFRTQKV</sequence>